<reference key="1">
    <citation type="submission" date="2004-03" db="EMBL/GenBank/DDBJ databases">
        <authorList>
            <person name="Huang C.Q."/>
            <person name="Zhou J.L."/>
            <person name="Wu S.L."/>
        </authorList>
    </citation>
    <scope>NUCLEOTIDE SEQUENCE [MRNA]</scope>
</reference>
<protein>
    <recommendedName>
        <fullName>Hydroxysteroid 11-beta-dehydrogenase 1-like protein</fullName>
        <ecNumber evidence="2">1.1.1.-</ecNumber>
    </recommendedName>
    <alternativeName>
        <fullName>11-beta-hydroxysteroid dehydrogenase type 3</fullName>
        <shortName>11-DH3</shortName>
        <shortName>11-beta-HSD3</shortName>
    </alternativeName>
</protein>
<evidence type="ECO:0000250" key="1"/>
<evidence type="ECO:0000250" key="2">
    <source>
        <dbReference type="UniProtKB" id="Q7Z5J1"/>
    </source>
</evidence>
<evidence type="ECO:0000255" key="3"/>
<evidence type="ECO:0000255" key="4">
    <source>
        <dbReference type="PROSITE-ProRule" id="PRU10001"/>
    </source>
</evidence>
<evidence type="ECO:0000305" key="5"/>
<sequence>MMKPFGKVLCAAGSLAVLLAFFWRDTFQPEQLSGARVLLTGASAGIGEQMAYHYATFGAEIVLTARREAVLQEVMKKCLTLGAKKVFYIPADMSSPSEPDRVVQFAVQNLGGLDYLVLNHIGVSPFQMWGGDVEHTRWLMQVNFFSYVALATAALPTLEKNHGSVVVVSSLTGKIPTPFTTSYSATKFALDGFFSSLRHELTMQKRNVSITLCILGLIDTDAALEKTRGKVFIAASPAAEAALAIIRGGAARLRELFYPWWLQPVHGLWVLLPNPRVLQSFYNYSGP</sequence>
<comment type="function">
    <text evidence="2">Unidirectional NADP(+)-dependent cortisol dehydrogenase (in vitro).</text>
</comment>
<comment type="catalytic activity">
    <reaction evidence="2">
        <text>cortisone + NADPH + H(+) = cortisol + NADP(+)</text>
        <dbReference type="Rhea" id="RHEA:68616"/>
        <dbReference type="ChEBI" id="CHEBI:15378"/>
        <dbReference type="ChEBI" id="CHEBI:16962"/>
        <dbReference type="ChEBI" id="CHEBI:17650"/>
        <dbReference type="ChEBI" id="CHEBI:57783"/>
        <dbReference type="ChEBI" id="CHEBI:58349"/>
    </reaction>
    <physiologicalReaction direction="right-to-left" evidence="2">
        <dbReference type="Rhea" id="RHEA:68618"/>
    </physiologicalReaction>
</comment>
<comment type="subcellular location">
    <subcellularLocation>
        <location evidence="5">Secreted</location>
    </subcellularLocation>
</comment>
<comment type="similarity">
    <text evidence="5">Belongs to the short-chain dehydrogenases/reductases (SDR) family.</text>
</comment>
<comment type="caution">
    <text evidence="5">Present in human, non-human primate, sheep, pig and many other higher organisms, whereas an ortholog is absent in the genomes of mouse, rat and rabbit.</text>
</comment>
<accession>Q6PUF4</accession>
<organism>
    <name type="scientific">Gallus gallus</name>
    <name type="common">Chicken</name>
    <dbReference type="NCBI Taxonomy" id="9031"/>
    <lineage>
        <taxon>Eukaryota</taxon>
        <taxon>Metazoa</taxon>
        <taxon>Chordata</taxon>
        <taxon>Craniata</taxon>
        <taxon>Vertebrata</taxon>
        <taxon>Euteleostomi</taxon>
        <taxon>Archelosauria</taxon>
        <taxon>Archosauria</taxon>
        <taxon>Dinosauria</taxon>
        <taxon>Saurischia</taxon>
        <taxon>Theropoda</taxon>
        <taxon>Coelurosauria</taxon>
        <taxon>Aves</taxon>
        <taxon>Neognathae</taxon>
        <taxon>Galloanserae</taxon>
        <taxon>Galliformes</taxon>
        <taxon>Phasianidae</taxon>
        <taxon>Phasianinae</taxon>
        <taxon>Gallus</taxon>
    </lineage>
</organism>
<name>DHI1L_CHICK</name>
<proteinExistence type="evidence at transcript level"/>
<gene>
    <name type="primary">HSD11B1L</name>
    <name type="synonym">HSD3</name>
</gene>
<keyword id="KW-0521">NADP</keyword>
<keyword id="KW-0560">Oxidoreductase</keyword>
<keyword id="KW-1185">Reference proteome</keyword>
<keyword id="KW-0964">Secreted</keyword>
<keyword id="KW-0732">Signal</keyword>
<dbReference type="EC" id="1.1.1.-" evidence="2"/>
<dbReference type="EMBL" id="AY578179">
    <property type="protein sequence ID" value="AAS89255.1"/>
    <property type="molecule type" value="mRNA"/>
</dbReference>
<dbReference type="RefSeq" id="NP_001001201.1">
    <property type="nucleotide sequence ID" value="NM_001001201.3"/>
</dbReference>
<dbReference type="RefSeq" id="NP_001385230.1">
    <property type="nucleotide sequence ID" value="NM_001398301.1"/>
</dbReference>
<dbReference type="RefSeq" id="NP_001385231.1">
    <property type="nucleotide sequence ID" value="NM_001398302.1"/>
</dbReference>
<dbReference type="SMR" id="Q6PUF4"/>
<dbReference type="FunCoup" id="Q6PUF4">
    <property type="interactions" value="333"/>
</dbReference>
<dbReference type="PaxDb" id="9031-ENSGALP00000020944"/>
<dbReference type="GeneID" id="408034"/>
<dbReference type="KEGG" id="gga:408034"/>
<dbReference type="CTD" id="374875"/>
<dbReference type="VEuPathDB" id="HostDB:geneid_408034"/>
<dbReference type="eggNOG" id="KOG1205">
    <property type="taxonomic scope" value="Eukaryota"/>
</dbReference>
<dbReference type="HOGENOM" id="CLU_010194_2_7_1"/>
<dbReference type="InParanoid" id="Q6PUF4"/>
<dbReference type="OrthoDB" id="1933717at2759"/>
<dbReference type="PhylomeDB" id="Q6PUF4"/>
<dbReference type="PRO" id="PR:Q6PUF4"/>
<dbReference type="Proteomes" id="UP000000539">
    <property type="component" value="Chromosome 28"/>
</dbReference>
<dbReference type="Bgee" id="ENSGALG00000012860">
    <property type="expression patterns" value="Expressed in kidney and 13 other cell types or tissues"/>
</dbReference>
<dbReference type="GO" id="GO:0005576">
    <property type="term" value="C:extracellular region"/>
    <property type="evidence" value="ECO:0007669"/>
    <property type="project" value="UniProtKB-SubCell"/>
</dbReference>
<dbReference type="GO" id="GO:0043231">
    <property type="term" value="C:intracellular membrane-bounded organelle"/>
    <property type="evidence" value="ECO:0000318"/>
    <property type="project" value="GO_Central"/>
</dbReference>
<dbReference type="GO" id="GO:0016491">
    <property type="term" value="F:oxidoreductase activity"/>
    <property type="evidence" value="ECO:0000318"/>
    <property type="project" value="GO_Central"/>
</dbReference>
<dbReference type="CDD" id="cd05332">
    <property type="entry name" value="11beta-HSD1_like_SDR_c"/>
    <property type="match status" value="1"/>
</dbReference>
<dbReference type="Gene3D" id="3.40.50.720">
    <property type="entry name" value="NAD(P)-binding Rossmann-like Domain"/>
    <property type="match status" value="1"/>
</dbReference>
<dbReference type="InterPro" id="IPR051253">
    <property type="entry name" value="11-beta-HSD"/>
</dbReference>
<dbReference type="InterPro" id="IPR036291">
    <property type="entry name" value="NAD(P)-bd_dom_sf"/>
</dbReference>
<dbReference type="InterPro" id="IPR020904">
    <property type="entry name" value="Sc_DH/Rdtase_CS"/>
</dbReference>
<dbReference type="InterPro" id="IPR002347">
    <property type="entry name" value="SDR_fam"/>
</dbReference>
<dbReference type="PANTHER" id="PTHR44279">
    <property type="entry name" value="HYDROXYSTEROID (11-BETA) DEHYDROGENASE 1-LIKE B-RELATED"/>
    <property type="match status" value="1"/>
</dbReference>
<dbReference type="PANTHER" id="PTHR44279:SF3">
    <property type="entry name" value="HYDROXYSTEROID 11-BETA-DEHYDROGENASE 1-LIKE PROTEIN"/>
    <property type="match status" value="1"/>
</dbReference>
<dbReference type="Pfam" id="PF00106">
    <property type="entry name" value="adh_short"/>
    <property type="match status" value="1"/>
</dbReference>
<dbReference type="PRINTS" id="PR00081">
    <property type="entry name" value="GDHRDH"/>
</dbReference>
<dbReference type="SUPFAM" id="SSF51735">
    <property type="entry name" value="NAD(P)-binding Rossmann-fold domains"/>
    <property type="match status" value="1"/>
</dbReference>
<dbReference type="PROSITE" id="PS00061">
    <property type="entry name" value="ADH_SHORT"/>
    <property type="match status" value="1"/>
</dbReference>
<feature type="signal peptide" evidence="3">
    <location>
        <begin position="1"/>
        <end position="20"/>
    </location>
</feature>
<feature type="chain" id="PRO_0000316818" description="Hydroxysteroid 11-beta-dehydrogenase 1-like protein">
    <location>
        <begin position="21"/>
        <end position="287"/>
    </location>
</feature>
<feature type="active site" description="Proton acceptor" evidence="4">
    <location>
        <position position="183"/>
    </location>
</feature>
<feature type="binding site" evidence="1">
    <location>
        <begin position="41"/>
        <end position="67"/>
    </location>
    <ligand>
        <name>NADP(+)</name>
        <dbReference type="ChEBI" id="CHEBI:58349"/>
    </ligand>
</feature>
<feature type="binding site" evidence="1">
    <location>
        <begin position="92"/>
        <end position="93"/>
    </location>
    <ligand>
        <name>NADP(+)</name>
        <dbReference type="ChEBI" id="CHEBI:58349"/>
    </ligand>
</feature>
<feature type="binding site" evidence="1">
    <location>
        <begin position="119"/>
        <end position="121"/>
    </location>
    <ligand>
        <name>NADP(+)</name>
        <dbReference type="ChEBI" id="CHEBI:58349"/>
    </ligand>
</feature>
<feature type="binding site" evidence="1">
    <location>
        <position position="170"/>
    </location>
    <ligand>
        <name>substrate</name>
    </ligand>
</feature>
<feature type="binding site" evidence="1">
    <location>
        <begin position="183"/>
        <end position="187"/>
    </location>
    <ligand>
        <name>NADP(+)</name>
        <dbReference type="ChEBI" id="CHEBI:58349"/>
    </ligand>
</feature>
<feature type="binding site" evidence="1">
    <location>
        <begin position="216"/>
        <end position="222"/>
    </location>
    <ligand>
        <name>NADP(+)</name>
        <dbReference type="ChEBI" id="CHEBI:58349"/>
    </ligand>
</feature>